<feature type="chain" id="PRO_0000456751" description="Arginine ADP-riboxanase OspC4">
    <location>
        <begin position="1"/>
        <end position="424"/>
    </location>
</feature>
<feature type="repeat" description="ANK 1" evidence="3">
    <location>
        <begin position="311"/>
        <end position="340"/>
    </location>
</feature>
<feature type="repeat" description="ANK 2" evidence="3">
    <location>
        <begin position="355"/>
        <end position="386"/>
    </location>
</feature>
<feature type="repeat" description="ANK 3" evidence="3">
    <location>
        <begin position="393"/>
        <end position="422"/>
    </location>
</feature>
<feature type="active site" evidence="2">
    <location>
        <position position="268"/>
    </location>
</feature>
<feature type="binding site" evidence="2">
    <location>
        <position position="85"/>
    </location>
    <ligand>
        <name>NAD(+)</name>
        <dbReference type="ChEBI" id="CHEBI:57540"/>
    </ligand>
</feature>
<feature type="binding site" evidence="2">
    <location>
        <position position="86"/>
    </location>
    <ligand>
        <name>NAD(+)</name>
        <dbReference type="ChEBI" id="CHEBI:57540"/>
    </ligand>
</feature>
<feature type="binding site" evidence="2">
    <location>
        <position position="87"/>
    </location>
    <ligand>
        <name>NAD(+)</name>
        <dbReference type="ChEBI" id="CHEBI:57540"/>
    </ligand>
</feature>
<feature type="binding site" evidence="2">
    <location>
        <position position="91"/>
    </location>
    <ligand>
        <name>NAD(+)</name>
        <dbReference type="ChEBI" id="CHEBI:57540"/>
    </ligand>
</feature>
<feature type="binding site" evidence="2">
    <location>
        <position position="104"/>
    </location>
    <ligand>
        <name>NAD(+)</name>
        <dbReference type="ChEBI" id="CHEBI:57540"/>
    </ligand>
</feature>
<feature type="binding site" evidence="2">
    <location>
        <position position="114"/>
    </location>
    <ligand>
        <name>NAD(+)</name>
        <dbReference type="ChEBI" id="CHEBI:57540"/>
    </ligand>
</feature>
<feature type="binding site" evidence="2">
    <location>
        <position position="130"/>
    </location>
    <ligand>
        <name>NAD(+)</name>
        <dbReference type="ChEBI" id="CHEBI:57540"/>
    </ligand>
</feature>
<feature type="binding site" evidence="2">
    <location>
        <position position="148"/>
    </location>
    <ligand>
        <name>NAD(+)</name>
        <dbReference type="ChEBI" id="CHEBI:57540"/>
    </ligand>
</feature>
<feature type="binding site" evidence="2">
    <location>
        <position position="153"/>
    </location>
    <ligand>
        <name>NAD(+)</name>
        <dbReference type="ChEBI" id="CHEBI:57540"/>
    </ligand>
</feature>
<feature type="binding site" evidence="2">
    <location>
        <position position="173"/>
    </location>
    <ligand>
        <name>NAD(+)</name>
        <dbReference type="ChEBI" id="CHEBI:57540"/>
    </ligand>
</feature>
<feature type="binding site" evidence="2">
    <location>
        <position position="268"/>
    </location>
    <ligand>
        <name>NAD(+)</name>
        <dbReference type="ChEBI" id="CHEBI:57540"/>
    </ligand>
</feature>
<feature type="site" description="Important for catalytic activity" evidence="2">
    <location>
        <position position="85"/>
    </location>
</feature>
<feature type="site" description="Important for catalytic activity" evidence="2">
    <location>
        <position position="130"/>
    </location>
</feature>
<feature type="site" description="Important for catalytic activity" evidence="2">
    <location>
        <position position="153"/>
    </location>
</feature>
<feature type="site" description="Important for catalytic activity" evidence="2">
    <location>
        <position position="173"/>
    </location>
</feature>
<organism>
    <name type="scientific">Shigella flexneri</name>
    <dbReference type="NCBI Taxonomy" id="623"/>
    <lineage>
        <taxon>Bacteria</taxon>
        <taxon>Pseudomonadati</taxon>
        <taxon>Pseudomonadota</taxon>
        <taxon>Gammaproteobacteria</taxon>
        <taxon>Enterobacterales</taxon>
        <taxon>Enterobacteriaceae</taxon>
        <taxon>Shigella</taxon>
    </lineage>
</organism>
<gene>
    <name evidence="5" type="primary">ospC4</name>
    <name evidence="7" type="ordered locus">CP0005</name>
    <name evidence="7" type="ORF">SF_p0005</name>
</gene>
<proteinExistence type="evidence at protein level"/>
<dbReference type="EC" id="4.3.99.-" evidence="4"/>
<dbReference type="EMBL" id="AF386526">
    <property type="protein sequence ID" value="AAL72319.1"/>
    <property type="molecule type" value="Genomic_DNA"/>
</dbReference>
<dbReference type="RefSeq" id="NP_858138.1">
    <property type="nucleotide sequence ID" value="NC_004851.1"/>
</dbReference>
<dbReference type="SMR" id="A0A0H2USP8"/>
<dbReference type="PaxDb" id="198214-CP0005"/>
<dbReference type="GeneID" id="1238015"/>
<dbReference type="KEGG" id="sfl:CP0005"/>
<dbReference type="PATRIC" id="fig|198214.7.peg.5231"/>
<dbReference type="HOGENOM" id="CLU_053336_0_0_6"/>
<dbReference type="Proteomes" id="UP000001006">
    <property type="component" value="Plasmid pCP301"/>
</dbReference>
<dbReference type="GO" id="GO:0005576">
    <property type="term" value="C:extracellular region"/>
    <property type="evidence" value="ECO:0007669"/>
    <property type="project" value="UniProtKB-SubCell"/>
</dbReference>
<dbReference type="GO" id="GO:0030430">
    <property type="term" value="C:host cell cytoplasm"/>
    <property type="evidence" value="ECO:0007669"/>
    <property type="project" value="UniProtKB-SubCell"/>
</dbReference>
<dbReference type="GO" id="GO:0140740">
    <property type="term" value="F:ADP-riboxanase activity"/>
    <property type="evidence" value="ECO:0007669"/>
    <property type="project" value="UniProtKB-ARBA"/>
</dbReference>
<dbReference type="GO" id="GO:0090729">
    <property type="term" value="F:toxin activity"/>
    <property type="evidence" value="ECO:0007669"/>
    <property type="project" value="UniProtKB-KW"/>
</dbReference>
<dbReference type="InterPro" id="IPR010366">
    <property type="entry name" value="OspC1-4"/>
</dbReference>
<dbReference type="Pfam" id="PF06128">
    <property type="entry name" value="Shigella_OspC"/>
    <property type="match status" value="1"/>
</dbReference>
<keyword id="KW-0040">ANK repeat</keyword>
<keyword id="KW-1035">Host cytoplasm</keyword>
<keyword id="KW-0456">Lyase</keyword>
<keyword id="KW-0520">NAD</keyword>
<keyword id="KW-0614">Plasmid</keyword>
<keyword id="KW-1185">Reference proteome</keyword>
<keyword id="KW-0677">Repeat</keyword>
<keyword id="KW-0964">Secreted</keyword>
<keyword id="KW-0800">Toxin</keyword>
<keyword id="KW-0843">Virulence</keyword>
<reference key="1">
    <citation type="journal article" date="2002" name="Nucleic Acids Res.">
        <title>Genome sequence of Shigella flexneri 2a: insights into pathogenicity through comparison with genomes of Escherichia coli K12 and O157.</title>
        <authorList>
            <person name="Jin Q."/>
            <person name="Yuan Z."/>
            <person name="Xu J."/>
            <person name="Wang Y."/>
            <person name="Shen Y."/>
            <person name="Lu W."/>
            <person name="Wang J."/>
            <person name="Liu H."/>
            <person name="Yang J."/>
            <person name="Yang F."/>
            <person name="Zhang X."/>
            <person name="Zhang J."/>
            <person name="Yang G."/>
            <person name="Wu H."/>
            <person name="Qu D."/>
            <person name="Dong J."/>
            <person name="Sun L."/>
            <person name="Xue Y."/>
            <person name="Zhao A."/>
            <person name="Gao Y."/>
            <person name="Zhu J."/>
            <person name="Kan B."/>
            <person name="Ding K."/>
            <person name="Chen S."/>
            <person name="Cheng H."/>
            <person name="Yao Z."/>
            <person name="He B."/>
            <person name="Chen R."/>
            <person name="Ma D."/>
            <person name="Qiang B."/>
            <person name="Wen Y."/>
            <person name="Hou Y."/>
            <person name="Yu J."/>
        </authorList>
    </citation>
    <scope>NUCLEOTIDE SEQUENCE [LARGE SCALE GENOMIC DNA]</scope>
    <source>
        <strain>301 / Serotype 2a</strain>
    </source>
</reference>
<reference key="2">
    <citation type="journal article" date="2022" name="Mol. Cell">
        <title>Pathogen hijacks programmed cell death signaling by arginine ADPR-deacylization of caspases.</title>
        <authorList>
            <person name="Peng T."/>
            <person name="Tao X."/>
            <person name="Xia Z."/>
            <person name="Hu S."/>
            <person name="Xue J."/>
            <person name="Zhu Q."/>
            <person name="Pan X."/>
            <person name="Zhang Q."/>
            <person name="Li S."/>
        </authorList>
    </citation>
    <scope>FUNCTION</scope>
    <scope>CATALYTIC ACTIVITY</scope>
</reference>
<geneLocation type="plasmid">
    <name>pCP301</name>
</geneLocation>
<protein>
    <recommendedName>
        <fullName evidence="6">Arginine ADP-riboxanase OspC4</fullName>
        <ecNumber evidence="4">4.3.99.-</ecNumber>
    </recommendedName>
</protein>
<accession>A0A0H2USP8</accession>
<comment type="function">
    <text evidence="4">ADP-riboxanase effector that mediates arginine ADP-riboxanation of host caspase CASP4/CASP11, thereby inhibiting pyroptosis.</text>
</comment>
<comment type="catalytic activity">
    <reaction evidence="4">
        <text>L-arginyl-[protein] + NAD(+) = ADP-riboxanated L-argininyl-[protein] + nicotinamide + NH4(+) + H(+)</text>
        <dbReference type="Rhea" id="RHEA:69500"/>
        <dbReference type="Rhea" id="RHEA-COMP:10532"/>
        <dbReference type="Rhea" id="RHEA-COMP:17719"/>
        <dbReference type="ChEBI" id="CHEBI:15378"/>
        <dbReference type="ChEBI" id="CHEBI:17154"/>
        <dbReference type="ChEBI" id="CHEBI:28938"/>
        <dbReference type="ChEBI" id="CHEBI:29965"/>
        <dbReference type="ChEBI" id="CHEBI:57540"/>
        <dbReference type="ChEBI" id="CHEBI:184300"/>
    </reaction>
    <physiologicalReaction direction="left-to-right" evidence="4">
        <dbReference type="Rhea" id="RHEA:69501"/>
    </physiologicalReaction>
</comment>
<comment type="subcellular location">
    <subcellularLocation>
        <location evidence="1">Secreted</location>
    </subcellularLocation>
    <subcellularLocation>
        <location evidence="1">Host cytoplasm</location>
    </subcellularLocation>
    <text evidence="1">Secreted via the type III secretion system (T3SS).</text>
</comment>
<comment type="similarity">
    <text evidence="6">Belongs to the OspC family.</text>
</comment>
<name>OSPC4_SHIFL</name>
<sequence length="424" mass="49261">MKNFLRKSIAAQSYSKMFSQGTSFKSLNLSLEAPSGARSSFRSLEHLDKVSRHYISEIIQKVHPLSSDERHLLSIIINSNFNFRHQSNSNLSNIILNIKSFDKIQSENIQTHKNTYSEDIKEISNHDFVFFGVEISNHQEKLPLNKTHHTVDFGANAYIIDHDSPYGYMTLTDHFDNAIPPVFYHEHQSFFLDNFKEVVDEVSRYVHGNQGKTDVPIFNTKDMRLGIGLHLIDFIRKSKDQGFREFCYNKNIDPVSLDRIINFVFQLEYHIPRMLSTDNFKKIKLRDISLEDAIKASNYEEINNKVTDKKMAHQALAYSLGNKKADIALYLLSKFNFTKQDVAEMEKMKNNRYCNLYDVEYLLSKDGANYKVLEYFINNGLVDVNKKFQKANSGDTMLDNAMKSKDSKMIDFFIKKWSGIRQTI</sequence>
<evidence type="ECO:0000250" key="1">
    <source>
        <dbReference type="UniProtKB" id="A0A0H2US87"/>
    </source>
</evidence>
<evidence type="ECO:0000250" key="2">
    <source>
        <dbReference type="UniProtKB" id="Q7NWF2"/>
    </source>
</evidence>
<evidence type="ECO:0000255" key="3"/>
<evidence type="ECO:0000269" key="4">
    <source>
    </source>
</evidence>
<evidence type="ECO:0000303" key="5">
    <source>
    </source>
</evidence>
<evidence type="ECO:0000305" key="6"/>
<evidence type="ECO:0000312" key="7">
    <source>
        <dbReference type="EMBL" id="AAL72319.1"/>
    </source>
</evidence>